<gene>
    <name type="primary">mief1</name>
    <name type="synonym">mid51</name>
    <name type="synonym">smcr7l</name>
    <name type="ORF">zgc:162279</name>
</gene>
<feature type="chain" id="PRO_0000310452" description="Mitochondrial dynamics protein MID51">
    <location>
        <begin position="1"/>
        <end position="468"/>
    </location>
</feature>
<feature type="topological domain" description="Mitochondrial intermembrane" evidence="3">
    <location>
        <begin position="1"/>
        <end position="29"/>
    </location>
</feature>
<feature type="transmembrane region" description="Helical" evidence="3">
    <location>
        <begin position="30"/>
        <end position="47"/>
    </location>
</feature>
<feature type="topological domain" description="Cytoplasmic" evidence="3">
    <location>
        <begin position="48"/>
        <end position="468"/>
    </location>
</feature>
<feature type="region of interest" description="Dimerization" evidence="1">
    <location>
        <begin position="50"/>
        <end position="196"/>
    </location>
</feature>
<feature type="region of interest" description="Disordered" evidence="4">
    <location>
        <begin position="56"/>
        <end position="123"/>
    </location>
</feature>
<feature type="region of interest" description="Important for interaction with DNM1L" evidence="1">
    <location>
        <begin position="161"/>
        <end position="170"/>
    </location>
</feature>
<feature type="region of interest" description="Important for interaction with DNM1L" evidence="1">
    <location>
        <begin position="235"/>
        <end position="244"/>
    </location>
</feature>
<feature type="compositionally biased region" description="Polar residues" evidence="4">
    <location>
        <begin position="91"/>
        <end position="108"/>
    </location>
</feature>
<feature type="binding site" evidence="1">
    <location>
        <position position="188"/>
    </location>
    <ligand>
        <name>ADP</name>
        <dbReference type="ChEBI" id="CHEBI:456216"/>
    </ligand>
</feature>
<feature type="binding site" evidence="1">
    <location>
        <position position="190"/>
    </location>
    <ligand>
        <name>ADP</name>
        <dbReference type="ChEBI" id="CHEBI:456216"/>
    </ligand>
</feature>
<feature type="binding site" evidence="1">
    <location>
        <position position="202"/>
    </location>
    <ligand>
        <name>ADP</name>
        <dbReference type="ChEBI" id="CHEBI:456216"/>
    </ligand>
</feature>
<feature type="binding site" evidence="1">
    <location>
        <position position="344"/>
    </location>
    <ligand>
        <name>ADP</name>
        <dbReference type="ChEBI" id="CHEBI:456216"/>
    </ligand>
</feature>
<feature type="binding site" evidence="1">
    <location>
        <position position="346"/>
    </location>
    <ligand>
        <name>ADP</name>
        <dbReference type="ChEBI" id="CHEBI:456216"/>
    </ligand>
</feature>
<feature type="binding site" evidence="1">
    <location>
        <position position="372"/>
    </location>
    <ligand>
        <name>ADP</name>
        <dbReference type="ChEBI" id="CHEBI:456216"/>
    </ligand>
</feature>
<name>MID51_DANRE</name>
<keyword id="KW-0472">Membrane</keyword>
<keyword id="KW-0496">Mitochondrion</keyword>
<keyword id="KW-1000">Mitochondrion outer membrane</keyword>
<keyword id="KW-0547">Nucleotide-binding</keyword>
<keyword id="KW-0597">Phosphoprotein</keyword>
<keyword id="KW-1185">Reference proteome</keyword>
<keyword id="KW-0812">Transmembrane</keyword>
<keyword id="KW-1133">Transmembrane helix</keyword>
<reference key="1">
    <citation type="submission" date="2007-03" db="EMBL/GenBank/DDBJ databases">
        <authorList>
            <consortium name="NIH - Zebrafish Gene Collection (ZGC) project"/>
        </authorList>
    </citation>
    <scope>NUCLEOTIDE SEQUENCE [LARGE SCALE MRNA]</scope>
    <source>
        <strain>WIK</strain>
        <tissue>Ovary</tissue>
    </source>
</reference>
<sequence length="468" mass="52101">MAGVNGDRKGKKDDNGLGTAIDFVLSNAKLVLGVGGAAMLGIATLAVKRMYDRALSAPSSPTKADPSGRRSWEEPSWLGSSPRTLNHDMKQNVSRSLQTLPTSSSSFKPDSLHRGLARGGRPAKAELQRARLRLSLQEHLWAFFHERVTIPSEEQSVARRAALDICAELRVFLHAKLPDMPLREMYLSGSLYDDLQVVTADHAQLMVPLILEKNLWSSIPGEDTIMNIPGFSLVRRENLEYFPRGSSYWDRCMVGGYLSPKSVLEVFEKLVAGSINWPAIGSVLDYVIRPVVPSETLTLEVQYETDRRLYVDFLPLLVMEDGVSLIAKPHRLAAERHENLWRQSFRVAETAKLRALDQEDAGCRSVCLKILKAVCKLNPALARLNASQLTNAILLLSEQEGDWTQEALADRFMQLLRALVGHLEAGRMPCTLNLKVNLLCELTPQEIDELGYTLYCALSDPESLLRTV</sequence>
<dbReference type="EMBL" id="BC134944">
    <property type="protein sequence ID" value="AAI34945.1"/>
    <property type="molecule type" value="mRNA"/>
</dbReference>
<dbReference type="RefSeq" id="NP_001077309.1">
    <property type="nucleotide sequence ID" value="NM_001083840.1"/>
</dbReference>
<dbReference type="SMR" id="A4IG61"/>
<dbReference type="FunCoup" id="A4IG61">
    <property type="interactions" value="2016"/>
</dbReference>
<dbReference type="STRING" id="7955.ENSDARP00000083758"/>
<dbReference type="PaxDb" id="7955-ENSDARP00000083758"/>
<dbReference type="PeptideAtlas" id="A4IG61"/>
<dbReference type="GeneID" id="564985"/>
<dbReference type="KEGG" id="dre:564985"/>
<dbReference type="AGR" id="ZFIN:ZDB-GENE-060810-64"/>
<dbReference type="CTD" id="54471"/>
<dbReference type="ZFIN" id="ZDB-GENE-060810-64">
    <property type="gene designation" value="mief1"/>
</dbReference>
<dbReference type="eggNOG" id="KOG4542">
    <property type="taxonomic scope" value="Eukaryota"/>
</dbReference>
<dbReference type="InParanoid" id="A4IG61"/>
<dbReference type="OrthoDB" id="5964386at2759"/>
<dbReference type="PhylomeDB" id="A4IG61"/>
<dbReference type="PRO" id="PR:A4IG61"/>
<dbReference type="Proteomes" id="UP000000437">
    <property type="component" value="Chromosome 3"/>
</dbReference>
<dbReference type="GO" id="GO:0005741">
    <property type="term" value="C:mitochondrial outer membrane"/>
    <property type="evidence" value="ECO:0000250"/>
    <property type="project" value="UniProtKB"/>
</dbReference>
<dbReference type="GO" id="GO:0005739">
    <property type="term" value="C:mitochondrion"/>
    <property type="evidence" value="ECO:0000250"/>
    <property type="project" value="UniProtKB"/>
</dbReference>
<dbReference type="GO" id="GO:0000166">
    <property type="term" value="F:nucleotide binding"/>
    <property type="evidence" value="ECO:0007669"/>
    <property type="project" value="UniProtKB-KW"/>
</dbReference>
<dbReference type="GO" id="GO:0007005">
    <property type="term" value="P:mitochondrion organization"/>
    <property type="evidence" value="ECO:0007669"/>
    <property type="project" value="InterPro"/>
</dbReference>
<dbReference type="GO" id="GO:0090141">
    <property type="term" value="P:positive regulation of mitochondrial fission"/>
    <property type="evidence" value="ECO:0000250"/>
    <property type="project" value="UniProtKB"/>
</dbReference>
<dbReference type="GO" id="GO:0010636">
    <property type="term" value="P:positive regulation of mitochondrial fusion"/>
    <property type="evidence" value="ECO:0000250"/>
    <property type="project" value="UniProtKB"/>
</dbReference>
<dbReference type="GO" id="GO:0090314">
    <property type="term" value="P:positive regulation of protein targeting to membrane"/>
    <property type="evidence" value="ECO:0000250"/>
    <property type="project" value="UniProtKB"/>
</dbReference>
<dbReference type="FunFam" id="1.10.1410.40:FF:000003">
    <property type="entry name" value="Mitochondrial dynamics protein MID51"/>
    <property type="match status" value="1"/>
</dbReference>
<dbReference type="FunFam" id="3.30.460.90:FF:000002">
    <property type="entry name" value="Mitochondrial dynamics protein MID51"/>
    <property type="match status" value="1"/>
</dbReference>
<dbReference type="Gene3D" id="1.10.1410.40">
    <property type="match status" value="1"/>
</dbReference>
<dbReference type="Gene3D" id="3.30.460.90">
    <property type="match status" value="1"/>
</dbReference>
<dbReference type="InterPro" id="IPR046906">
    <property type="entry name" value="Mab-21_HhH/H2TH-like"/>
</dbReference>
<dbReference type="InterPro" id="IPR024810">
    <property type="entry name" value="MAB21L/cGLR"/>
</dbReference>
<dbReference type="InterPro" id="IPR045909">
    <property type="entry name" value="MID49/MID51"/>
</dbReference>
<dbReference type="InterPro" id="IPR049097">
    <property type="entry name" value="MID51-like_C"/>
</dbReference>
<dbReference type="PANTHER" id="PTHR16451:SF14">
    <property type="entry name" value="MITOCHONDRIAL DYNAMICS PROTEIN MID51"/>
    <property type="match status" value="1"/>
</dbReference>
<dbReference type="PANTHER" id="PTHR16451">
    <property type="entry name" value="MITOCHONDRIAL DYNAMICS PROTEINS 49/51 FAMILY MEMBER"/>
    <property type="match status" value="1"/>
</dbReference>
<dbReference type="Pfam" id="PF20266">
    <property type="entry name" value="Mab-21_C"/>
    <property type="match status" value="1"/>
</dbReference>
<dbReference type="Pfam" id="PF21297">
    <property type="entry name" value="MID51-like_C"/>
    <property type="match status" value="1"/>
</dbReference>
<dbReference type="SMART" id="SM01265">
    <property type="entry name" value="Mab-21"/>
    <property type="match status" value="1"/>
</dbReference>
<protein>
    <recommendedName>
        <fullName>Mitochondrial dynamics protein MID51</fullName>
    </recommendedName>
    <alternativeName>
        <fullName>Mitochondrial dynamics protein of 51 kDa homolog</fullName>
    </alternativeName>
    <alternativeName>
        <fullName>Mitochondrial elongation factor 1</fullName>
    </alternativeName>
    <alternativeName>
        <fullName>Smith-Magenis syndrome chromosomal region candidate gene 7 protein-like</fullName>
    </alternativeName>
</protein>
<evidence type="ECO:0000250" key="1"/>
<evidence type="ECO:0000250" key="2">
    <source>
        <dbReference type="UniProtKB" id="Q9NQG6"/>
    </source>
</evidence>
<evidence type="ECO:0000255" key="3"/>
<evidence type="ECO:0000256" key="4">
    <source>
        <dbReference type="SAM" id="MobiDB-lite"/>
    </source>
</evidence>
<evidence type="ECO:0000305" key="5"/>
<comment type="function">
    <text evidence="2">Mitochondrial outer membrane protein which regulates mitochondrial fission/fusion dynamics. Promotes the recruitment and association of the fission mediator dynamin-related protein 1 (DNM1L) to the mitochondrial surface independently of the mitochondrial fission FIS1 and MFF proteins. Regulates DNM1L GTPase activity and DNM1L oligomerization (By similarity).</text>
</comment>
<comment type="subunit">
    <text evidence="2">Homodimer.</text>
</comment>
<comment type="subcellular location">
    <subcellularLocation>
        <location evidence="2">Mitochondrion outer membrane</location>
        <topology evidence="2">Single-pass membrane protein</topology>
    </subcellularLocation>
</comment>
<comment type="similarity">
    <text evidence="5">Belongs to the MID49/MID51 family.</text>
</comment>
<proteinExistence type="evidence at transcript level"/>
<organism>
    <name type="scientific">Danio rerio</name>
    <name type="common">Zebrafish</name>
    <name type="synonym">Brachydanio rerio</name>
    <dbReference type="NCBI Taxonomy" id="7955"/>
    <lineage>
        <taxon>Eukaryota</taxon>
        <taxon>Metazoa</taxon>
        <taxon>Chordata</taxon>
        <taxon>Craniata</taxon>
        <taxon>Vertebrata</taxon>
        <taxon>Euteleostomi</taxon>
        <taxon>Actinopterygii</taxon>
        <taxon>Neopterygii</taxon>
        <taxon>Teleostei</taxon>
        <taxon>Ostariophysi</taxon>
        <taxon>Cypriniformes</taxon>
        <taxon>Danionidae</taxon>
        <taxon>Danioninae</taxon>
        <taxon>Danio</taxon>
    </lineage>
</organism>
<accession>A4IG61</accession>